<gene>
    <name type="ordered locus">A674R</name>
</gene>
<protein>
    <recommendedName>
        <fullName evidence="1">Probable flavin-dependent thymidylate synthase</fullName>
        <shortName evidence="1">FDTS</shortName>
        <ecNumber evidence="1">2.1.1.148</ecNumber>
    </recommendedName>
    <alternativeName>
        <fullName evidence="1">FAD-dependent thymidylate synthase</fullName>
    </alternativeName>
</protein>
<accession>O41156</accession>
<comment type="function">
    <text evidence="1">Catalyzes the reductive methylation of 2'-deoxyuridine-5'-monophosphate (dUMP) to 2'-deoxythymidine-5'-monophosphate (dTMP) while utilizing 5,10-methylenetetrahydrofolate (mTHF) as the methyl donor, and NADPH and FADH(2) as the reductant.</text>
</comment>
<comment type="catalytic activity">
    <reaction evidence="1">
        <text>dUMP + (6R)-5,10-methylene-5,6,7,8-tetrahydrofolate + NADPH + H(+) = dTMP + (6S)-5,6,7,8-tetrahydrofolate + NADP(+)</text>
        <dbReference type="Rhea" id="RHEA:29043"/>
        <dbReference type="ChEBI" id="CHEBI:15378"/>
        <dbReference type="ChEBI" id="CHEBI:15636"/>
        <dbReference type="ChEBI" id="CHEBI:57453"/>
        <dbReference type="ChEBI" id="CHEBI:57783"/>
        <dbReference type="ChEBI" id="CHEBI:58349"/>
        <dbReference type="ChEBI" id="CHEBI:63528"/>
        <dbReference type="ChEBI" id="CHEBI:246422"/>
        <dbReference type="EC" id="2.1.1.148"/>
    </reaction>
</comment>
<comment type="cofactor">
    <cofactor evidence="1">
        <name>FAD</name>
        <dbReference type="ChEBI" id="CHEBI:57692"/>
    </cofactor>
    <text evidence="1">Binds 4 FAD per tetramer. Each FAD binding site is formed by three monomers.</text>
</comment>
<comment type="pathway">
    <text evidence="1">Pyrimidine metabolism; dTTP biosynthesis.</text>
</comment>
<comment type="subunit">
    <text evidence="1">Homotetramer.</text>
</comment>
<comment type="similarity">
    <text evidence="3">Belongs to the thymidylate synthase ThyX family.</text>
</comment>
<proteinExistence type="evidence at protein level"/>
<sequence length="216" mass="24902">MSAKLISVTKPVVEGVNTAEELIAYAARVSNPENQINNKTASGLLKYCIRHKHWSIFETAFMTLELKTSRGIAAQVLRHRSFHFQEFSQRYASVMETPPPHQARFQDHKNRQNSLDTVPEDDQTWWATEQEKLYAQSMELYNKALEKGIAKECARFILPLSTPTTIYMSGTIRDWIHYIELRTSNGTQREHIDLANACKEIFIKEFPSIAKALDWV</sequence>
<organism>
    <name type="scientific">Paramecium bursaria Chlorella virus 1</name>
    <name type="common">PBCV-1</name>
    <dbReference type="NCBI Taxonomy" id="10506"/>
    <lineage>
        <taxon>Viruses</taxon>
        <taxon>Varidnaviria</taxon>
        <taxon>Bamfordvirae</taxon>
        <taxon>Nucleocytoviricota</taxon>
        <taxon>Megaviricetes</taxon>
        <taxon>Algavirales</taxon>
        <taxon>Phycodnaviridae</taxon>
        <taxon>Chlorovirus</taxon>
    </lineage>
</organism>
<feature type="chain" id="PRO_0000175603" description="Probable flavin-dependent thymidylate synthase">
    <location>
        <begin position="1"/>
        <end position="216"/>
    </location>
</feature>
<feature type="domain" description="ThyX" evidence="2">
    <location>
        <begin position="1"/>
        <end position="216"/>
    </location>
</feature>
<feature type="short sequence motif" description="ThyX motif" evidence="2">
    <location>
        <begin position="78"/>
        <end position="88"/>
    </location>
</feature>
<feature type="active site" description="Involved in ionization of N3 of dUMP, leading to its activation" evidence="1">
    <location>
        <position position="182"/>
    </location>
</feature>
<feature type="binding site" evidence="1">
    <location>
        <position position="55"/>
    </location>
    <ligand>
        <name>FAD</name>
        <dbReference type="ChEBI" id="CHEBI:57692"/>
        <note>ligand shared between neighboring subunits</note>
    </ligand>
</feature>
<feature type="binding site" evidence="1">
    <location>
        <begin position="75"/>
        <end position="78"/>
    </location>
    <ligand>
        <name>dUMP</name>
        <dbReference type="ChEBI" id="CHEBI:246422"/>
        <note>ligand shared between dimeric partners</note>
    </ligand>
</feature>
<feature type="binding site" evidence="1">
    <location>
        <begin position="78"/>
        <end position="80"/>
    </location>
    <ligand>
        <name>FAD</name>
        <dbReference type="ChEBI" id="CHEBI:57692"/>
        <note>ligand shared between neighboring subunits</note>
    </ligand>
</feature>
<feature type="binding site" description="in other chain" evidence="1">
    <location>
        <begin position="86"/>
        <end position="90"/>
    </location>
    <ligand>
        <name>dUMP</name>
        <dbReference type="ChEBI" id="CHEBI:246422"/>
        <note>ligand shared between dimeric partners</note>
    </ligand>
</feature>
<feature type="binding site" evidence="1">
    <location>
        <position position="86"/>
    </location>
    <ligand>
        <name>FAD</name>
        <dbReference type="ChEBI" id="CHEBI:57692"/>
        <note>ligand shared between neighboring subunits</note>
    </ligand>
</feature>
<feature type="binding site" description="in other chain" evidence="1">
    <location>
        <position position="155"/>
    </location>
    <ligand>
        <name>dUMP</name>
        <dbReference type="ChEBI" id="CHEBI:246422"/>
        <note>ligand shared between dimeric partners</note>
    </ligand>
</feature>
<feature type="binding site" evidence="1">
    <location>
        <position position="177"/>
    </location>
    <ligand>
        <name>FAD</name>
        <dbReference type="ChEBI" id="CHEBI:57692"/>
        <note>ligand shared between neighboring subunits</note>
    </ligand>
</feature>
<feature type="binding site" evidence="1">
    <location>
        <position position="182"/>
    </location>
    <ligand>
        <name>dUMP</name>
        <dbReference type="ChEBI" id="CHEBI:246422"/>
        <note>ligand shared between dimeric partners</note>
    </ligand>
</feature>
<feature type="strand" evidence="4">
    <location>
        <begin position="2"/>
        <end position="11"/>
    </location>
</feature>
<feature type="helix" evidence="4">
    <location>
        <begin position="19"/>
        <end position="28"/>
    </location>
</feature>
<feature type="helix" evidence="4">
    <location>
        <begin position="35"/>
        <end position="38"/>
    </location>
</feature>
<feature type="helix" evidence="4">
    <location>
        <begin position="41"/>
        <end position="50"/>
    </location>
</feature>
<feature type="helix" evidence="4">
    <location>
        <begin position="54"/>
        <end position="58"/>
    </location>
</feature>
<feature type="strand" evidence="4">
    <location>
        <begin position="61"/>
        <end position="69"/>
    </location>
</feature>
<feature type="helix" evidence="4">
    <location>
        <begin position="70"/>
        <end position="76"/>
    </location>
</feature>
<feature type="strand" evidence="4">
    <location>
        <begin position="82"/>
        <end position="86"/>
    </location>
</feature>
<feature type="turn" evidence="5">
    <location>
        <begin position="89"/>
        <end position="91"/>
    </location>
</feature>
<feature type="helix" evidence="4">
    <location>
        <begin position="126"/>
        <end position="146"/>
    </location>
</feature>
<feature type="helix" evidence="4">
    <location>
        <begin position="151"/>
        <end position="154"/>
    </location>
</feature>
<feature type="helix" evidence="4">
    <location>
        <begin position="155"/>
        <end position="157"/>
    </location>
</feature>
<feature type="strand" evidence="4">
    <location>
        <begin position="162"/>
        <end position="171"/>
    </location>
</feature>
<feature type="helix" evidence="4">
    <location>
        <begin position="172"/>
        <end position="182"/>
    </location>
</feature>
<feature type="helix" evidence="4">
    <location>
        <begin position="189"/>
        <end position="205"/>
    </location>
</feature>
<feature type="helix" evidence="4">
    <location>
        <begin position="207"/>
        <end position="212"/>
    </location>
</feature>
<evidence type="ECO:0000250" key="1">
    <source>
        <dbReference type="UniProtKB" id="Q9WYT0"/>
    </source>
</evidence>
<evidence type="ECO:0000255" key="2">
    <source>
        <dbReference type="PROSITE-ProRule" id="PRU00661"/>
    </source>
</evidence>
<evidence type="ECO:0000305" key="3"/>
<evidence type="ECO:0007829" key="4">
    <source>
        <dbReference type="PDB" id="2CFA"/>
    </source>
</evidence>
<evidence type="ECO:0007829" key="5">
    <source>
        <dbReference type="PDB" id="4FZB"/>
    </source>
</evidence>
<keyword id="KW-0002">3D-structure</keyword>
<keyword id="KW-0274">FAD</keyword>
<keyword id="KW-0285">Flavoprotein</keyword>
<keyword id="KW-0489">Methyltransferase</keyword>
<keyword id="KW-0521">NADP</keyword>
<keyword id="KW-0545">Nucleotide biosynthesis</keyword>
<keyword id="KW-1185">Reference proteome</keyword>
<keyword id="KW-0808">Transferase</keyword>
<organismHost>
    <name type="scientific">Chlorella</name>
    <dbReference type="NCBI Taxonomy" id="3071"/>
</organismHost>
<name>THYX_PBCV1</name>
<reference key="1">
    <citation type="journal article" date="1997" name="Virology">
        <title>Analysis of 74 kb of DNA located at the right end of the 330-kb chlorella virus PBCV-1 genome.</title>
        <authorList>
            <person name="Li Y."/>
            <person name="Lu Z."/>
            <person name="Sun L."/>
            <person name="Ropp S."/>
            <person name="Kutish G.F."/>
            <person name="Rock D.L."/>
            <person name="van Etten J.L."/>
        </authorList>
    </citation>
    <scope>NUCLEOTIDE SEQUENCE [LARGE SCALE GENOMIC DNA]</scope>
</reference>
<dbReference type="EC" id="2.1.1.148" evidence="1"/>
<dbReference type="EMBL" id="JF411744">
    <property type="protein sequence ID" value="AAC96983.1"/>
    <property type="molecule type" value="Genomic_DNA"/>
</dbReference>
<dbReference type="PIR" id="T18176">
    <property type="entry name" value="T18176"/>
</dbReference>
<dbReference type="RefSeq" id="NP_049030.1">
    <property type="nucleotide sequence ID" value="NC_000852.5"/>
</dbReference>
<dbReference type="PDB" id="2CFA">
    <property type="method" value="X-ray"/>
    <property type="resolution" value="2.30 A"/>
    <property type="chains" value="A/B=1-216"/>
</dbReference>
<dbReference type="PDB" id="4FZB">
    <property type="method" value="X-ray"/>
    <property type="resolution" value="2.59 A"/>
    <property type="chains" value="A/B/C/D/E/F/G/H/I/J/K/L/M/N/O/P=2-216"/>
</dbReference>
<dbReference type="PDBsum" id="2CFA"/>
<dbReference type="PDBsum" id="4FZB"/>
<dbReference type="SMR" id="O41156"/>
<dbReference type="BindingDB" id="O41156"/>
<dbReference type="ChEMBL" id="CHEMBL1075203"/>
<dbReference type="GeneID" id="918188"/>
<dbReference type="KEGG" id="vg:918188"/>
<dbReference type="OrthoDB" id="8223at10239"/>
<dbReference type="BRENDA" id="2.1.1.148">
    <property type="organism ID" value="4540"/>
</dbReference>
<dbReference type="UniPathway" id="UPA00575"/>
<dbReference type="EvolutionaryTrace" id="O41156"/>
<dbReference type="PRO" id="PR:O41156"/>
<dbReference type="Proteomes" id="UP000000862">
    <property type="component" value="Genome"/>
</dbReference>
<dbReference type="GO" id="GO:0050660">
    <property type="term" value="F:flavin adenine dinucleotide binding"/>
    <property type="evidence" value="ECO:0007669"/>
    <property type="project" value="InterPro"/>
</dbReference>
<dbReference type="GO" id="GO:0070402">
    <property type="term" value="F:NADPH binding"/>
    <property type="evidence" value="ECO:0007669"/>
    <property type="project" value="TreeGrafter"/>
</dbReference>
<dbReference type="GO" id="GO:0050797">
    <property type="term" value="F:thymidylate synthase (FAD) activity"/>
    <property type="evidence" value="ECO:0007669"/>
    <property type="project" value="UniProtKB-EC"/>
</dbReference>
<dbReference type="GO" id="GO:0004799">
    <property type="term" value="F:thymidylate synthase activity"/>
    <property type="evidence" value="ECO:0007669"/>
    <property type="project" value="TreeGrafter"/>
</dbReference>
<dbReference type="GO" id="GO:0006231">
    <property type="term" value="P:dTMP biosynthetic process"/>
    <property type="evidence" value="ECO:0007669"/>
    <property type="project" value="InterPro"/>
</dbReference>
<dbReference type="GO" id="GO:0006235">
    <property type="term" value="P:dTTP biosynthetic process"/>
    <property type="evidence" value="ECO:0007669"/>
    <property type="project" value="UniProtKB-UniPathway"/>
</dbReference>
<dbReference type="GO" id="GO:0032259">
    <property type="term" value="P:methylation"/>
    <property type="evidence" value="ECO:0007669"/>
    <property type="project" value="UniProtKB-KW"/>
</dbReference>
<dbReference type="CDD" id="cd20175">
    <property type="entry name" value="ThyX"/>
    <property type="match status" value="1"/>
</dbReference>
<dbReference type="Gene3D" id="1.20.5.3070">
    <property type="match status" value="1"/>
</dbReference>
<dbReference type="Gene3D" id="3.30.1360.170">
    <property type="match status" value="1"/>
</dbReference>
<dbReference type="InterPro" id="IPR003669">
    <property type="entry name" value="Thymidylate_synthase_ThyX"/>
</dbReference>
<dbReference type="InterPro" id="IPR036098">
    <property type="entry name" value="Thymidylate_synthase_ThyX_sf"/>
</dbReference>
<dbReference type="NCBIfam" id="TIGR02170">
    <property type="entry name" value="thyX"/>
    <property type="match status" value="1"/>
</dbReference>
<dbReference type="PANTHER" id="PTHR34934">
    <property type="entry name" value="FLAVIN-DEPENDENT THYMIDYLATE SYNTHASE"/>
    <property type="match status" value="1"/>
</dbReference>
<dbReference type="PANTHER" id="PTHR34934:SF1">
    <property type="entry name" value="FLAVIN-DEPENDENT THYMIDYLATE SYNTHASE"/>
    <property type="match status" value="1"/>
</dbReference>
<dbReference type="Pfam" id="PF02511">
    <property type="entry name" value="Thy1"/>
    <property type="match status" value="1"/>
</dbReference>
<dbReference type="SUPFAM" id="SSF69796">
    <property type="entry name" value="Thymidylate synthase-complementing protein Thy1"/>
    <property type="match status" value="1"/>
</dbReference>
<dbReference type="PROSITE" id="PS51331">
    <property type="entry name" value="THYX"/>
    <property type="match status" value="1"/>
</dbReference>